<evidence type="ECO:0000255" key="1">
    <source>
        <dbReference type="HAMAP-Rule" id="MF_00148"/>
    </source>
</evidence>
<gene>
    <name evidence="1" type="primary">ung</name>
    <name type="ordered locus">ECA3289</name>
</gene>
<feature type="chain" id="PRO_0000176095" description="Uracil-DNA glycosylase">
    <location>
        <begin position="1"/>
        <end position="228"/>
    </location>
</feature>
<feature type="active site" description="Proton acceptor" evidence="1">
    <location>
        <position position="64"/>
    </location>
</feature>
<proteinExistence type="inferred from homology"/>
<organism>
    <name type="scientific">Pectobacterium atrosepticum (strain SCRI 1043 / ATCC BAA-672)</name>
    <name type="common">Erwinia carotovora subsp. atroseptica</name>
    <dbReference type="NCBI Taxonomy" id="218491"/>
    <lineage>
        <taxon>Bacteria</taxon>
        <taxon>Pseudomonadati</taxon>
        <taxon>Pseudomonadota</taxon>
        <taxon>Gammaproteobacteria</taxon>
        <taxon>Enterobacterales</taxon>
        <taxon>Pectobacteriaceae</taxon>
        <taxon>Pectobacterium</taxon>
    </lineage>
</organism>
<keyword id="KW-0963">Cytoplasm</keyword>
<keyword id="KW-0227">DNA damage</keyword>
<keyword id="KW-0234">DNA repair</keyword>
<keyword id="KW-0378">Hydrolase</keyword>
<keyword id="KW-1185">Reference proteome</keyword>
<comment type="function">
    <text evidence="1">Excises uracil residues from the DNA which can arise as a result of misincorporation of dUMP residues by DNA polymerase or due to deamination of cytosine.</text>
</comment>
<comment type="catalytic activity">
    <reaction evidence="1">
        <text>Hydrolyzes single-stranded DNA or mismatched double-stranded DNA and polynucleotides, releasing free uracil.</text>
        <dbReference type="EC" id="3.2.2.27"/>
    </reaction>
</comment>
<comment type="subcellular location">
    <subcellularLocation>
        <location evidence="1">Cytoplasm</location>
    </subcellularLocation>
</comment>
<comment type="similarity">
    <text evidence="1">Belongs to the uracil-DNA glycosylase (UDG) superfamily. UNG family.</text>
</comment>
<sequence length="228" mass="25417">MATSLTWHDVLAQEKQQSYFINTLEFVGKERSAGKTIYPPQKDVFNAFRFTELHQVKVVILGQDPYHGPNQAHGLSFSVRPGVPAPPSLGNIYKELASDIPGFEIPRHGFLQSWAEQGVLLLNTVLTVEAGQAHSHANLGWETFTDRVIAALNEQREGLVFLLWGSHAQKKGNIIDPQRHHVLKSPHPSPLSAHRGFLGCKHFSQANQLLEQQGLSAIDWTPRLPEEA</sequence>
<protein>
    <recommendedName>
        <fullName evidence="1">Uracil-DNA glycosylase</fullName>
        <shortName evidence="1">UDG</shortName>
        <ecNumber evidence="1">3.2.2.27</ecNumber>
    </recommendedName>
</protein>
<dbReference type="EC" id="3.2.2.27" evidence="1"/>
<dbReference type="EMBL" id="BX950851">
    <property type="protein sequence ID" value="CAG76187.1"/>
    <property type="molecule type" value="Genomic_DNA"/>
</dbReference>
<dbReference type="RefSeq" id="WP_011094806.1">
    <property type="nucleotide sequence ID" value="NC_004547.2"/>
</dbReference>
<dbReference type="SMR" id="Q6D208"/>
<dbReference type="STRING" id="218491.ECA3289"/>
<dbReference type="GeneID" id="57209972"/>
<dbReference type="KEGG" id="eca:ECA3289"/>
<dbReference type="PATRIC" id="fig|218491.5.peg.3335"/>
<dbReference type="eggNOG" id="COG0692">
    <property type="taxonomic scope" value="Bacteria"/>
</dbReference>
<dbReference type="HOGENOM" id="CLU_032162_3_0_6"/>
<dbReference type="OrthoDB" id="9804372at2"/>
<dbReference type="Proteomes" id="UP000007966">
    <property type="component" value="Chromosome"/>
</dbReference>
<dbReference type="GO" id="GO:0005737">
    <property type="term" value="C:cytoplasm"/>
    <property type="evidence" value="ECO:0007669"/>
    <property type="project" value="UniProtKB-SubCell"/>
</dbReference>
<dbReference type="GO" id="GO:0004844">
    <property type="term" value="F:uracil DNA N-glycosylase activity"/>
    <property type="evidence" value="ECO:0007669"/>
    <property type="project" value="UniProtKB-UniRule"/>
</dbReference>
<dbReference type="GO" id="GO:0097510">
    <property type="term" value="P:base-excision repair, AP site formation via deaminated base removal"/>
    <property type="evidence" value="ECO:0007669"/>
    <property type="project" value="TreeGrafter"/>
</dbReference>
<dbReference type="CDD" id="cd10027">
    <property type="entry name" value="UDG-F1-like"/>
    <property type="match status" value="1"/>
</dbReference>
<dbReference type="FunFam" id="3.40.470.10:FF:000001">
    <property type="entry name" value="Uracil-DNA glycosylase"/>
    <property type="match status" value="1"/>
</dbReference>
<dbReference type="Gene3D" id="3.40.470.10">
    <property type="entry name" value="Uracil-DNA glycosylase-like domain"/>
    <property type="match status" value="1"/>
</dbReference>
<dbReference type="HAMAP" id="MF_00148">
    <property type="entry name" value="UDG"/>
    <property type="match status" value="1"/>
</dbReference>
<dbReference type="InterPro" id="IPR002043">
    <property type="entry name" value="UDG_fam1"/>
</dbReference>
<dbReference type="InterPro" id="IPR018085">
    <property type="entry name" value="Ura-DNA_Glyclase_AS"/>
</dbReference>
<dbReference type="InterPro" id="IPR005122">
    <property type="entry name" value="Uracil-DNA_glycosylase-like"/>
</dbReference>
<dbReference type="InterPro" id="IPR036895">
    <property type="entry name" value="Uracil-DNA_glycosylase-like_sf"/>
</dbReference>
<dbReference type="NCBIfam" id="NF003588">
    <property type="entry name" value="PRK05254.1-1"/>
    <property type="match status" value="1"/>
</dbReference>
<dbReference type="NCBIfam" id="NF003589">
    <property type="entry name" value="PRK05254.1-2"/>
    <property type="match status" value="1"/>
</dbReference>
<dbReference type="NCBIfam" id="NF003591">
    <property type="entry name" value="PRK05254.1-4"/>
    <property type="match status" value="1"/>
</dbReference>
<dbReference type="NCBIfam" id="NF003592">
    <property type="entry name" value="PRK05254.1-5"/>
    <property type="match status" value="1"/>
</dbReference>
<dbReference type="NCBIfam" id="TIGR00628">
    <property type="entry name" value="ung"/>
    <property type="match status" value="1"/>
</dbReference>
<dbReference type="PANTHER" id="PTHR11264">
    <property type="entry name" value="URACIL-DNA GLYCOSYLASE"/>
    <property type="match status" value="1"/>
</dbReference>
<dbReference type="PANTHER" id="PTHR11264:SF0">
    <property type="entry name" value="URACIL-DNA GLYCOSYLASE"/>
    <property type="match status" value="1"/>
</dbReference>
<dbReference type="Pfam" id="PF03167">
    <property type="entry name" value="UDG"/>
    <property type="match status" value="1"/>
</dbReference>
<dbReference type="SMART" id="SM00986">
    <property type="entry name" value="UDG"/>
    <property type="match status" value="1"/>
</dbReference>
<dbReference type="SMART" id="SM00987">
    <property type="entry name" value="UreE_C"/>
    <property type="match status" value="1"/>
</dbReference>
<dbReference type="SUPFAM" id="SSF52141">
    <property type="entry name" value="Uracil-DNA glycosylase-like"/>
    <property type="match status" value="1"/>
</dbReference>
<dbReference type="PROSITE" id="PS00130">
    <property type="entry name" value="U_DNA_GLYCOSYLASE"/>
    <property type="match status" value="1"/>
</dbReference>
<reference key="1">
    <citation type="journal article" date="2004" name="Proc. Natl. Acad. Sci. U.S.A.">
        <title>Genome sequence of the enterobacterial phytopathogen Erwinia carotovora subsp. atroseptica and characterization of virulence factors.</title>
        <authorList>
            <person name="Bell K.S."/>
            <person name="Sebaihia M."/>
            <person name="Pritchard L."/>
            <person name="Holden M.T.G."/>
            <person name="Hyman L.J."/>
            <person name="Holeva M.C."/>
            <person name="Thomson N.R."/>
            <person name="Bentley S.D."/>
            <person name="Churcher L.J.C."/>
            <person name="Mungall K."/>
            <person name="Atkin R."/>
            <person name="Bason N."/>
            <person name="Brooks K."/>
            <person name="Chillingworth T."/>
            <person name="Clark K."/>
            <person name="Doggett J."/>
            <person name="Fraser A."/>
            <person name="Hance Z."/>
            <person name="Hauser H."/>
            <person name="Jagels K."/>
            <person name="Moule S."/>
            <person name="Norbertczak H."/>
            <person name="Ormond D."/>
            <person name="Price C."/>
            <person name="Quail M.A."/>
            <person name="Sanders M."/>
            <person name="Walker D."/>
            <person name="Whitehead S."/>
            <person name="Salmond G.P.C."/>
            <person name="Birch P.R.J."/>
            <person name="Parkhill J."/>
            <person name="Toth I.K."/>
        </authorList>
    </citation>
    <scope>NUCLEOTIDE SEQUENCE [LARGE SCALE GENOMIC DNA]</scope>
    <source>
        <strain>SCRI 1043 / ATCC BAA-672</strain>
    </source>
</reference>
<accession>Q6D208</accession>
<name>UNG_PECAS</name>